<organism>
    <name type="scientific">Bacillus subtilis</name>
    <dbReference type="NCBI Taxonomy" id="1423"/>
    <lineage>
        <taxon>Bacteria</taxon>
        <taxon>Bacillati</taxon>
        <taxon>Bacillota</taxon>
        <taxon>Bacilli</taxon>
        <taxon>Bacillales</taxon>
        <taxon>Bacillaceae</taxon>
        <taxon>Bacillus</taxon>
    </lineage>
</organism>
<dbReference type="EC" id="6.3.2.49" evidence="1"/>
<dbReference type="EMBL" id="AF396778">
    <property type="protein sequence ID" value="AAM90571.1"/>
    <property type="molecule type" value="Genomic_DNA"/>
</dbReference>
<dbReference type="SMR" id="Q8KWT3"/>
<dbReference type="STRING" id="483913.AN935_19100"/>
<dbReference type="PATRIC" id="fig|1423.171.peg.2214"/>
<dbReference type="BRENDA" id="6.3.2.49">
    <property type="organism ID" value="658"/>
</dbReference>
<dbReference type="UniPathway" id="UPA00100"/>
<dbReference type="GO" id="GO:0005524">
    <property type="term" value="F:ATP binding"/>
    <property type="evidence" value="ECO:0007669"/>
    <property type="project" value="UniProtKB-KW"/>
</dbReference>
<dbReference type="GO" id="GO:0034026">
    <property type="term" value="F:L-amino-acid alpha-ligase activity"/>
    <property type="evidence" value="ECO:0007669"/>
    <property type="project" value="UniProtKB-EC"/>
</dbReference>
<dbReference type="GO" id="GO:0046872">
    <property type="term" value="F:metal ion binding"/>
    <property type="evidence" value="ECO:0007669"/>
    <property type="project" value="UniProtKB-KW"/>
</dbReference>
<dbReference type="GO" id="GO:0017000">
    <property type="term" value="P:antibiotic biosynthetic process"/>
    <property type="evidence" value="ECO:0007669"/>
    <property type="project" value="UniProtKB-KW"/>
</dbReference>
<dbReference type="Gene3D" id="3.40.50.20">
    <property type="match status" value="1"/>
</dbReference>
<dbReference type="Gene3D" id="3.90.1170.60">
    <property type="match status" value="1"/>
</dbReference>
<dbReference type="Gene3D" id="3.30.1490.20">
    <property type="entry name" value="ATP-grasp fold, A domain"/>
    <property type="match status" value="1"/>
</dbReference>
<dbReference type="Gene3D" id="3.30.470.20">
    <property type="entry name" value="ATP-grasp fold, B domain"/>
    <property type="match status" value="1"/>
</dbReference>
<dbReference type="InterPro" id="IPR052032">
    <property type="entry name" value="ATP-dep_AA_Ligase"/>
</dbReference>
<dbReference type="InterPro" id="IPR011761">
    <property type="entry name" value="ATP-grasp"/>
</dbReference>
<dbReference type="InterPro" id="IPR013815">
    <property type="entry name" value="ATP_grasp_subdomain_1"/>
</dbReference>
<dbReference type="PANTHER" id="PTHR43585:SF2">
    <property type="entry name" value="ATP-GRASP ENZYME FSQD"/>
    <property type="match status" value="1"/>
</dbReference>
<dbReference type="PANTHER" id="PTHR43585">
    <property type="entry name" value="FUMIPYRROLE BIOSYNTHESIS PROTEIN C"/>
    <property type="match status" value="1"/>
</dbReference>
<dbReference type="Pfam" id="PF13535">
    <property type="entry name" value="ATP-grasp_4"/>
    <property type="match status" value="1"/>
</dbReference>
<dbReference type="SUPFAM" id="SSF56059">
    <property type="entry name" value="Glutathione synthetase ATP-binding domain-like"/>
    <property type="match status" value="1"/>
</dbReference>
<dbReference type="PROSITE" id="PS50975">
    <property type="entry name" value="ATP_GRASP"/>
    <property type="match status" value="1"/>
</dbReference>
<accession>Q8KWT3</accession>
<sequence length="472" mass="52166">MERKTVLVIADLGGCPPHMFYKSAAEKYNLVSFIPRPFAITASHAALIEKYSVAVIKDKDYFKSLADFEHPDSIYWAHEDHDKPEEEVVEEIVKVAGMFAVDAITTNNELFIAPMAKACERLGLRGAGVQAAENARDKNKMRAAFNRAGVKSIKNKRVTTLEDFRAALQEIGTPLILKPTYLASSIGVTLIKEMETAEAEFNRVNEYLKSINVPKAVTFEAPFIAEEFLQGEYDDWYETSGYSDYISIEGIMADGEYFPVAIHDKTPQIGFTETSHITPSILDDDAKRKIVEAAKKANEGLGLENCATHTEIKLMKNREAGLIESAARFAGWNMIPNIKKVFGVDMAQLLLDVLCFGKEADLPKGLLEQEPCYVADCHLYPQHFKENGQLPETAVDFVIESIDIPDGVLKGDTEIVSFSAAEAGTSVDLRLFEAFNSIAAFELKGSNSGDVAESIKQIQQQAKLTAKYALPV</sequence>
<evidence type="ECO:0000250" key="1">
    <source>
        <dbReference type="UniProtKB" id="P39641"/>
    </source>
</evidence>
<evidence type="ECO:0000255" key="2">
    <source>
        <dbReference type="PROSITE-ProRule" id="PRU00409"/>
    </source>
</evidence>
<evidence type="ECO:0000303" key="3">
    <source>
    </source>
</evidence>
<evidence type="ECO:0000305" key="4">
    <source>
    </source>
</evidence>
<name>BACD_BACIU</name>
<reference key="1">
    <citation type="journal article" date="2005" name="Arch. Microbiol.">
        <title>bac genes for recombinant bacilysin and anticapsin production in Bacillus host strains.</title>
        <authorList>
            <person name="Steinborn G."/>
            <person name="Hajirezaei M.-R."/>
            <person name="Hofemeister J."/>
        </authorList>
    </citation>
    <scope>NUCLEOTIDE SEQUENCE [GENOMIC DNA]</scope>
    <scope>FUNCTION IN BACILYSIN PRODUCTION</scope>
    <scope>GENE NAME</scope>
    <source>
        <strain>A1/3</strain>
    </source>
</reference>
<proteinExistence type="evidence at protein level"/>
<feature type="chain" id="PRO_0000064802" description="Alanine--anticapsin ligase">
    <location>
        <begin position="1"/>
        <end position="472"/>
    </location>
</feature>
<feature type="domain" description="ATP-grasp" evidence="2">
    <location>
        <begin position="142"/>
        <end position="355"/>
    </location>
</feature>
<feature type="binding site" evidence="1">
    <location>
        <position position="109"/>
    </location>
    <ligand>
        <name>Mg(2+)</name>
        <dbReference type="ChEBI" id="CHEBI:18420"/>
        <label>1</label>
    </ligand>
</feature>
<feature type="binding site" evidence="1">
    <location>
        <position position="138"/>
    </location>
    <ligand>
        <name>ATP</name>
        <dbReference type="ChEBI" id="CHEBI:30616"/>
    </ligand>
</feature>
<feature type="binding site" evidence="1">
    <location>
        <position position="178"/>
    </location>
    <ligand>
        <name>ATP</name>
        <dbReference type="ChEBI" id="CHEBI:30616"/>
    </ligand>
</feature>
<feature type="binding site" evidence="1">
    <location>
        <position position="182"/>
    </location>
    <ligand>
        <name>Mg(2+)</name>
        <dbReference type="ChEBI" id="CHEBI:18420"/>
        <label>1</label>
    </ligand>
</feature>
<feature type="binding site" evidence="1">
    <location>
        <begin position="184"/>
        <end position="185"/>
    </location>
    <ligand>
        <name>ATP</name>
        <dbReference type="ChEBI" id="CHEBI:30616"/>
    </ligand>
</feature>
<feature type="binding site" evidence="1">
    <location>
        <begin position="226"/>
        <end position="229"/>
    </location>
    <ligand>
        <name>ATP</name>
        <dbReference type="ChEBI" id="CHEBI:30616"/>
    </ligand>
</feature>
<feature type="binding site" evidence="1">
    <location>
        <position position="268"/>
    </location>
    <ligand>
        <name>ATP</name>
        <dbReference type="ChEBI" id="CHEBI:30616"/>
    </ligand>
</feature>
<feature type="binding site" evidence="1">
    <location>
        <position position="273"/>
    </location>
    <ligand>
        <name>substrate</name>
    </ligand>
</feature>
<feature type="binding site" evidence="1">
    <location>
        <begin position="309"/>
        <end position="311"/>
    </location>
    <ligand>
        <name>substrate</name>
    </ligand>
</feature>
<feature type="binding site" evidence="1">
    <location>
        <position position="311"/>
    </location>
    <ligand>
        <name>Mg(2+)</name>
        <dbReference type="ChEBI" id="CHEBI:18420"/>
        <label>2</label>
    </ligand>
</feature>
<feature type="binding site" evidence="1">
    <location>
        <position position="324"/>
    </location>
    <ligand>
        <name>Mg(2+)</name>
        <dbReference type="ChEBI" id="CHEBI:18420"/>
        <label>1</label>
    </ligand>
</feature>
<feature type="binding site" evidence="1">
    <location>
        <position position="324"/>
    </location>
    <ligand>
        <name>Mg(2+)</name>
        <dbReference type="ChEBI" id="CHEBI:18420"/>
        <label>2</label>
    </ligand>
</feature>
<feature type="binding site" evidence="1">
    <location>
        <begin position="328"/>
        <end position="331"/>
    </location>
    <ligand>
        <name>substrate</name>
    </ligand>
</feature>
<feature type="site" description="Plays a key role in restricting the N-terminal substrate specificity to small amino acids such as L-Ala" evidence="1">
    <location>
        <position position="332"/>
    </location>
</feature>
<gene>
    <name evidence="3" type="primary">bacD</name>
</gene>
<keyword id="KW-0045">Antibiotic biosynthesis</keyword>
<keyword id="KW-0067">ATP-binding</keyword>
<keyword id="KW-0436">Ligase</keyword>
<keyword id="KW-0460">Magnesium</keyword>
<keyword id="KW-0479">Metal-binding</keyword>
<keyword id="KW-0547">Nucleotide-binding</keyword>
<protein>
    <recommendedName>
        <fullName evidence="1">Alanine--anticapsin ligase</fullName>
        <ecNumber evidence="1">6.3.2.49</ecNumber>
    </recommendedName>
    <alternativeName>
        <fullName evidence="1">ATP-dependent dipeptide ligase</fullName>
    </alternativeName>
    <alternativeName>
        <fullName evidence="1">Bacilysin synthetase</fullName>
    </alternativeName>
    <alternativeName>
        <fullName evidence="1">L-Ala-L-amino acid dipeptide ligase</fullName>
    </alternativeName>
    <alternativeName>
        <fullName evidence="1">L-alanine--L-anticapsin ligase</fullName>
    </alternativeName>
    <alternativeName>
        <fullName evidence="1">L-amino acid ligase</fullName>
        <shortName evidence="1">Lal</shortName>
    </alternativeName>
</protein>
<comment type="function">
    <text evidence="1">Part of the bacABCDEFG operon responsible for the biosynthesis of bacilysin, an irreversible inactivator of the glutaminase domain of glucosamine synthetase. Catalyzes the formation of alpha-dipeptides from various L-amino acids in the presence of ATP. In vivo catalyzes the ligation of L-alanine and L-anticapsin (epoxycyclohexanonyl-Ala) to produce the final bacilysin antibiotic (L-Ala-L-4S-cyclohexenonyl-Ala dipeptide).</text>
</comment>
<comment type="catalytic activity">
    <reaction evidence="1">
        <text>L-anticapsin + L-alanine + ATP = bacilysin + ADP + phosphate + H(+)</text>
        <dbReference type="Rhea" id="RHEA:44332"/>
        <dbReference type="ChEBI" id="CHEBI:15378"/>
        <dbReference type="ChEBI" id="CHEBI:30616"/>
        <dbReference type="ChEBI" id="CHEBI:43474"/>
        <dbReference type="ChEBI" id="CHEBI:57972"/>
        <dbReference type="ChEBI" id="CHEBI:84310"/>
        <dbReference type="ChEBI" id="CHEBI:84311"/>
        <dbReference type="ChEBI" id="CHEBI:456216"/>
        <dbReference type="EC" id="6.3.2.49"/>
    </reaction>
</comment>
<comment type="cofactor">
    <cofactor evidence="1">
        <name>Mg(2+)</name>
        <dbReference type="ChEBI" id="CHEBI:18420"/>
    </cofactor>
    <text evidence="1">Binds 2 Mg(2+) ions per monomer.</text>
</comment>
<comment type="pathway">
    <text evidence="4">Antibiotic biosynthesis; bacilysin biosynthesis.</text>
</comment>
<comment type="subunit">
    <text evidence="1">Monomer or homodimer.</text>
</comment>